<organism>
    <name type="scientific">Mus musculus</name>
    <name type="common">Mouse</name>
    <dbReference type="NCBI Taxonomy" id="10090"/>
    <lineage>
        <taxon>Eukaryota</taxon>
        <taxon>Metazoa</taxon>
        <taxon>Chordata</taxon>
        <taxon>Craniata</taxon>
        <taxon>Vertebrata</taxon>
        <taxon>Euteleostomi</taxon>
        <taxon>Mammalia</taxon>
        <taxon>Eutheria</taxon>
        <taxon>Euarchontoglires</taxon>
        <taxon>Glires</taxon>
        <taxon>Rodentia</taxon>
        <taxon>Myomorpha</taxon>
        <taxon>Muroidea</taxon>
        <taxon>Muridae</taxon>
        <taxon>Murinae</taxon>
        <taxon>Mus</taxon>
        <taxon>Mus</taxon>
    </lineage>
</organism>
<proteinExistence type="evidence at protein level"/>
<accession>Q9D6E4</accession>
<accession>Q8BYN8</accession>
<keyword id="KW-0597">Phosphoprotein</keyword>
<keyword id="KW-1185">Reference proteome</keyword>
<keyword id="KW-0677">Repeat</keyword>
<keyword id="KW-0802">TPR repeat</keyword>
<protein>
    <recommendedName>
        <fullName>Tetratricopeptide repeat protein 9B</fullName>
        <shortName>TPR repeat protein 9B</shortName>
    </recommendedName>
</protein>
<dbReference type="EMBL" id="AK013779">
    <property type="protein sequence ID" value="BAB28991.1"/>
    <property type="molecule type" value="mRNA"/>
</dbReference>
<dbReference type="EMBL" id="AK038864">
    <property type="protein sequence ID" value="BAC30153.1"/>
    <property type="status" value="ALT_INIT"/>
    <property type="molecule type" value="mRNA"/>
</dbReference>
<dbReference type="EMBL" id="BC089566">
    <property type="protein sequence ID" value="AAH89566.1"/>
    <property type="molecule type" value="mRNA"/>
</dbReference>
<dbReference type="CCDS" id="CCDS21028.1"/>
<dbReference type="RefSeq" id="NP_082693.1">
    <property type="nucleotide sequence ID" value="NM_028417.1"/>
</dbReference>
<dbReference type="SMR" id="Q9D6E4"/>
<dbReference type="BioGRID" id="215722">
    <property type="interactions" value="3"/>
</dbReference>
<dbReference type="FunCoup" id="Q9D6E4">
    <property type="interactions" value="42"/>
</dbReference>
<dbReference type="IntAct" id="Q9D6E4">
    <property type="interactions" value="1"/>
</dbReference>
<dbReference type="STRING" id="10090.ENSMUSP00000008088"/>
<dbReference type="GlyGen" id="Q9D6E4">
    <property type="glycosylation" value="2 sites"/>
</dbReference>
<dbReference type="iPTMnet" id="Q9D6E4"/>
<dbReference type="PhosphoSitePlus" id="Q9D6E4"/>
<dbReference type="PaxDb" id="10090-ENSMUSP00000008088"/>
<dbReference type="PeptideAtlas" id="Q9D6E4"/>
<dbReference type="ProteomicsDB" id="298010"/>
<dbReference type="Antibodypedia" id="30476">
    <property type="antibodies" value="52 antibodies from 14 providers"/>
</dbReference>
<dbReference type="Ensembl" id="ENSMUST00000008088.9">
    <property type="protein sequence ID" value="ENSMUSP00000008088.8"/>
    <property type="gene ID" value="ENSMUSG00000007944.9"/>
</dbReference>
<dbReference type="GeneID" id="73032"/>
<dbReference type="KEGG" id="mmu:73032"/>
<dbReference type="UCSC" id="uc009fwu.1">
    <property type="organism name" value="mouse"/>
</dbReference>
<dbReference type="AGR" id="MGI:1920282"/>
<dbReference type="CTD" id="148014"/>
<dbReference type="MGI" id="MGI:1920282">
    <property type="gene designation" value="Ttc9b"/>
</dbReference>
<dbReference type="VEuPathDB" id="HostDB:ENSMUSG00000007944"/>
<dbReference type="eggNOG" id="ENOG502QQHT">
    <property type="taxonomic scope" value="Eukaryota"/>
</dbReference>
<dbReference type="GeneTree" id="ENSGT00940000161494"/>
<dbReference type="HOGENOM" id="CLU_100621_1_0_1"/>
<dbReference type="InParanoid" id="Q9D6E4"/>
<dbReference type="OMA" id="RVREYCF"/>
<dbReference type="OrthoDB" id="433738at2759"/>
<dbReference type="PhylomeDB" id="Q9D6E4"/>
<dbReference type="TreeFam" id="TF331917"/>
<dbReference type="BioGRID-ORCS" id="73032">
    <property type="hits" value="5 hits in 77 CRISPR screens"/>
</dbReference>
<dbReference type="PRO" id="PR:Q9D6E4"/>
<dbReference type="Proteomes" id="UP000000589">
    <property type="component" value="Chromosome 7"/>
</dbReference>
<dbReference type="RNAct" id="Q9D6E4">
    <property type="molecule type" value="protein"/>
</dbReference>
<dbReference type="Bgee" id="ENSMUSG00000007944">
    <property type="expression patterns" value="Expressed in visual cortex and 78 other cell types or tissues"/>
</dbReference>
<dbReference type="Gene3D" id="1.25.40.10">
    <property type="entry name" value="Tetratricopeptide repeat domain"/>
    <property type="match status" value="1"/>
</dbReference>
<dbReference type="InterPro" id="IPR039663">
    <property type="entry name" value="AIP/AIPL1/TTC9"/>
</dbReference>
<dbReference type="InterPro" id="IPR011990">
    <property type="entry name" value="TPR-like_helical_dom_sf"/>
</dbReference>
<dbReference type="InterPro" id="IPR013105">
    <property type="entry name" value="TPR_2"/>
</dbReference>
<dbReference type="InterPro" id="IPR019734">
    <property type="entry name" value="TPR_rpt"/>
</dbReference>
<dbReference type="PANTHER" id="PTHR11242">
    <property type="entry name" value="ARYL HYDROCARBON RECEPTOR INTERACTING PROTEIN RELATED"/>
    <property type="match status" value="1"/>
</dbReference>
<dbReference type="PANTHER" id="PTHR11242:SF13">
    <property type="entry name" value="TETRATRICOPEPTIDE REPEAT PROTEIN 9B"/>
    <property type="match status" value="1"/>
</dbReference>
<dbReference type="Pfam" id="PF07719">
    <property type="entry name" value="TPR_2"/>
    <property type="match status" value="1"/>
</dbReference>
<dbReference type="SMART" id="SM00028">
    <property type="entry name" value="TPR"/>
    <property type="match status" value="2"/>
</dbReference>
<dbReference type="SUPFAM" id="SSF48452">
    <property type="entry name" value="TPR-like"/>
    <property type="match status" value="1"/>
</dbReference>
<dbReference type="PROSITE" id="PS50005">
    <property type="entry name" value="TPR"/>
    <property type="match status" value="1"/>
</dbReference>
<dbReference type="PROSITE" id="PS50293">
    <property type="entry name" value="TPR_REGION"/>
    <property type="match status" value="1"/>
</dbReference>
<comment type="similarity">
    <text evidence="2">Belongs to the TTC9 family.</text>
</comment>
<comment type="sequence caution" evidence="2">
    <conflict type="erroneous initiation">
        <sequence resource="EMBL-CDS" id="BAC30153"/>
    </conflict>
</comment>
<evidence type="ECO:0000256" key="1">
    <source>
        <dbReference type="SAM" id="MobiDB-lite"/>
    </source>
</evidence>
<evidence type="ECO:0000305" key="2"/>
<evidence type="ECO:0007744" key="3">
    <source>
    </source>
</evidence>
<name>TTC9B_MOUSE</name>
<reference key="1">
    <citation type="journal article" date="2005" name="Science">
        <title>The transcriptional landscape of the mammalian genome.</title>
        <authorList>
            <person name="Carninci P."/>
            <person name="Kasukawa T."/>
            <person name="Katayama S."/>
            <person name="Gough J."/>
            <person name="Frith M.C."/>
            <person name="Maeda N."/>
            <person name="Oyama R."/>
            <person name="Ravasi T."/>
            <person name="Lenhard B."/>
            <person name="Wells C."/>
            <person name="Kodzius R."/>
            <person name="Shimokawa K."/>
            <person name="Bajic V.B."/>
            <person name="Brenner S.E."/>
            <person name="Batalov S."/>
            <person name="Forrest A.R."/>
            <person name="Zavolan M."/>
            <person name="Davis M.J."/>
            <person name="Wilming L.G."/>
            <person name="Aidinis V."/>
            <person name="Allen J.E."/>
            <person name="Ambesi-Impiombato A."/>
            <person name="Apweiler R."/>
            <person name="Aturaliya R.N."/>
            <person name="Bailey T.L."/>
            <person name="Bansal M."/>
            <person name="Baxter L."/>
            <person name="Beisel K.W."/>
            <person name="Bersano T."/>
            <person name="Bono H."/>
            <person name="Chalk A.M."/>
            <person name="Chiu K.P."/>
            <person name="Choudhary V."/>
            <person name="Christoffels A."/>
            <person name="Clutterbuck D.R."/>
            <person name="Crowe M.L."/>
            <person name="Dalla E."/>
            <person name="Dalrymple B.P."/>
            <person name="de Bono B."/>
            <person name="Della Gatta G."/>
            <person name="di Bernardo D."/>
            <person name="Down T."/>
            <person name="Engstrom P."/>
            <person name="Fagiolini M."/>
            <person name="Faulkner G."/>
            <person name="Fletcher C.F."/>
            <person name="Fukushima T."/>
            <person name="Furuno M."/>
            <person name="Futaki S."/>
            <person name="Gariboldi M."/>
            <person name="Georgii-Hemming P."/>
            <person name="Gingeras T.R."/>
            <person name="Gojobori T."/>
            <person name="Green R.E."/>
            <person name="Gustincich S."/>
            <person name="Harbers M."/>
            <person name="Hayashi Y."/>
            <person name="Hensch T.K."/>
            <person name="Hirokawa N."/>
            <person name="Hill D."/>
            <person name="Huminiecki L."/>
            <person name="Iacono M."/>
            <person name="Ikeo K."/>
            <person name="Iwama A."/>
            <person name="Ishikawa T."/>
            <person name="Jakt M."/>
            <person name="Kanapin A."/>
            <person name="Katoh M."/>
            <person name="Kawasawa Y."/>
            <person name="Kelso J."/>
            <person name="Kitamura H."/>
            <person name="Kitano H."/>
            <person name="Kollias G."/>
            <person name="Krishnan S.P."/>
            <person name="Kruger A."/>
            <person name="Kummerfeld S.K."/>
            <person name="Kurochkin I.V."/>
            <person name="Lareau L.F."/>
            <person name="Lazarevic D."/>
            <person name="Lipovich L."/>
            <person name="Liu J."/>
            <person name="Liuni S."/>
            <person name="McWilliam S."/>
            <person name="Madan Babu M."/>
            <person name="Madera M."/>
            <person name="Marchionni L."/>
            <person name="Matsuda H."/>
            <person name="Matsuzawa S."/>
            <person name="Miki H."/>
            <person name="Mignone F."/>
            <person name="Miyake S."/>
            <person name="Morris K."/>
            <person name="Mottagui-Tabar S."/>
            <person name="Mulder N."/>
            <person name="Nakano N."/>
            <person name="Nakauchi H."/>
            <person name="Ng P."/>
            <person name="Nilsson R."/>
            <person name="Nishiguchi S."/>
            <person name="Nishikawa S."/>
            <person name="Nori F."/>
            <person name="Ohara O."/>
            <person name="Okazaki Y."/>
            <person name="Orlando V."/>
            <person name="Pang K.C."/>
            <person name="Pavan W.J."/>
            <person name="Pavesi G."/>
            <person name="Pesole G."/>
            <person name="Petrovsky N."/>
            <person name="Piazza S."/>
            <person name="Reed J."/>
            <person name="Reid J.F."/>
            <person name="Ring B.Z."/>
            <person name="Ringwald M."/>
            <person name="Rost B."/>
            <person name="Ruan Y."/>
            <person name="Salzberg S.L."/>
            <person name="Sandelin A."/>
            <person name="Schneider C."/>
            <person name="Schoenbach C."/>
            <person name="Sekiguchi K."/>
            <person name="Semple C.A."/>
            <person name="Seno S."/>
            <person name="Sessa L."/>
            <person name="Sheng Y."/>
            <person name="Shibata Y."/>
            <person name="Shimada H."/>
            <person name="Shimada K."/>
            <person name="Silva D."/>
            <person name="Sinclair B."/>
            <person name="Sperling S."/>
            <person name="Stupka E."/>
            <person name="Sugiura K."/>
            <person name="Sultana R."/>
            <person name="Takenaka Y."/>
            <person name="Taki K."/>
            <person name="Tammoja K."/>
            <person name="Tan S.L."/>
            <person name="Tang S."/>
            <person name="Taylor M.S."/>
            <person name="Tegner J."/>
            <person name="Teichmann S.A."/>
            <person name="Ueda H.R."/>
            <person name="van Nimwegen E."/>
            <person name="Verardo R."/>
            <person name="Wei C.L."/>
            <person name="Yagi K."/>
            <person name="Yamanishi H."/>
            <person name="Zabarovsky E."/>
            <person name="Zhu S."/>
            <person name="Zimmer A."/>
            <person name="Hide W."/>
            <person name="Bult C."/>
            <person name="Grimmond S.M."/>
            <person name="Teasdale R.D."/>
            <person name="Liu E.T."/>
            <person name="Brusic V."/>
            <person name="Quackenbush J."/>
            <person name="Wahlestedt C."/>
            <person name="Mattick J.S."/>
            <person name="Hume D.A."/>
            <person name="Kai C."/>
            <person name="Sasaki D."/>
            <person name="Tomaru Y."/>
            <person name="Fukuda S."/>
            <person name="Kanamori-Katayama M."/>
            <person name="Suzuki M."/>
            <person name="Aoki J."/>
            <person name="Arakawa T."/>
            <person name="Iida J."/>
            <person name="Imamura K."/>
            <person name="Itoh M."/>
            <person name="Kato T."/>
            <person name="Kawaji H."/>
            <person name="Kawagashira N."/>
            <person name="Kawashima T."/>
            <person name="Kojima M."/>
            <person name="Kondo S."/>
            <person name="Konno H."/>
            <person name="Nakano K."/>
            <person name="Ninomiya N."/>
            <person name="Nishio T."/>
            <person name="Okada M."/>
            <person name="Plessy C."/>
            <person name="Shibata K."/>
            <person name="Shiraki T."/>
            <person name="Suzuki S."/>
            <person name="Tagami M."/>
            <person name="Waki K."/>
            <person name="Watahiki A."/>
            <person name="Okamura-Oho Y."/>
            <person name="Suzuki H."/>
            <person name="Kawai J."/>
            <person name="Hayashizaki Y."/>
        </authorList>
    </citation>
    <scope>NUCLEOTIDE SEQUENCE [LARGE SCALE MRNA]</scope>
    <source>
        <strain>C57BL/6J</strain>
        <tissue>Hippocampus</tissue>
    </source>
</reference>
<reference key="2">
    <citation type="journal article" date="2004" name="Genome Res.">
        <title>The status, quality, and expansion of the NIH full-length cDNA project: the Mammalian Gene Collection (MGC).</title>
        <authorList>
            <consortium name="The MGC Project Team"/>
        </authorList>
    </citation>
    <scope>NUCLEOTIDE SEQUENCE [LARGE SCALE MRNA]</scope>
    <source>
        <tissue>Brain</tissue>
    </source>
</reference>
<reference key="3">
    <citation type="journal article" date="2010" name="Cell">
        <title>A tissue-specific atlas of mouse protein phosphorylation and expression.</title>
        <authorList>
            <person name="Huttlin E.L."/>
            <person name="Jedrychowski M.P."/>
            <person name="Elias J.E."/>
            <person name="Goswami T."/>
            <person name="Rad R."/>
            <person name="Beausoleil S.A."/>
            <person name="Villen J."/>
            <person name="Haas W."/>
            <person name="Sowa M.E."/>
            <person name="Gygi S.P."/>
        </authorList>
    </citation>
    <scope>PHOSPHORYLATION [LARGE SCALE ANALYSIS] AT SER-7 AND SER-27</scope>
    <scope>IDENTIFICATION BY MASS SPECTROMETRY [LARGE SCALE ANALYSIS]</scope>
    <source>
        <tissue>Brain</tissue>
    </source>
</reference>
<feature type="chain" id="PRO_0000294460" description="Tetratricopeptide repeat protein 9B">
    <location>
        <begin position="1"/>
        <end position="239"/>
    </location>
</feature>
<feature type="repeat" description="TPR 1">
    <location>
        <begin position="63"/>
        <end position="97"/>
    </location>
</feature>
<feature type="repeat" description="TPR 2">
    <location>
        <begin position="169"/>
        <end position="202"/>
    </location>
</feature>
<feature type="region of interest" description="Disordered" evidence="1">
    <location>
        <begin position="1"/>
        <end position="54"/>
    </location>
</feature>
<feature type="region of interest" description="Disordered" evidence="1">
    <location>
        <begin position="98"/>
        <end position="121"/>
    </location>
</feature>
<feature type="compositionally biased region" description="Pro residues" evidence="1">
    <location>
        <begin position="16"/>
        <end position="32"/>
    </location>
</feature>
<feature type="compositionally biased region" description="Pro residues" evidence="1">
    <location>
        <begin position="104"/>
        <end position="114"/>
    </location>
</feature>
<feature type="modified residue" description="Phosphoserine" evidence="3">
    <location>
        <position position="7"/>
    </location>
</feature>
<feature type="modified residue" description="Phosphoserine" evidence="3">
    <location>
        <position position="27"/>
    </location>
</feature>
<gene>
    <name type="primary">Ttc9b</name>
</gene>
<sequence length="239" mass="25909">MQRGALSPVLMLSAAPEPPPRPPPALSPPGPGSAPRHGSARSGPAPEPSGGLAAALDSSLRAAVAFKAEGQRCYREKKFREAIGKYHRALLQLKAAQGARPGGLPTPSPGPTTSPGPARLSEEQRRLVENTEVECYDSLTACLLQSELVNYERVREYCLKVLEKQQGNFKATYRAGIAFYHLGDYARALRYLQEARSREPTDTNVLRYIQLTQLKMNRCSLQREDSDGGTGGPARNVVG</sequence>